<accession>B3DNT3</accession>
<sequence>MPGIVLIGAQWGDEGKGKATDLIGTKVDYVARFNGGNNAGHSVVVGDESYALHLLPSGIINPNLTPVIGNGVVVDPEVLFEEIDGLESRGIDCSHLKVSEAAHIIAPYHRTLDKVTERFLGKHKIGTTGRGIGPAYADKINRVGIRVHDLFNADHLHDKVEASLHQKNQMLVKLYNRRPIDVDQTTEELLKLGERLKPYVANTGLILNKALDEGKTVLFEGAQATMLDVDHGTYPFVTSSNPTAGGACTGTGVGPTKITRVIGVSKAYVTRVGEGPFPTELLDESGEWLRQQGHEFGVTTGRPRRCGWFDAVVNRYASQVNGLTDIVLTKLDVLTGLKEIPICVAYDVDGERHDDMPTDQAAFAAAKPIYETMPGWDEDISDCHSFDELPATCQAYVKRLEELSGCRISAIGTGPQRDHVIQINSLVD</sequence>
<dbReference type="EC" id="6.3.4.4" evidence="1"/>
<dbReference type="EMBL" id="CP000605">
    <property type="protein sequence ID" value="ACD98792.1"/>
    <property type="molecule type" value="Genomic_DNA"/>
</dbReference>
<dbReference type="RefSeq" id="WP_007055899.1">
    <property type="nucleotide sequence ID" value="NZ_AABM02000013.1"/>
</dbReference>
<dbReference type="SMR" id="B3DNT3"/>
<dbReference type="KEGG" id="blj:BLD_1347"/>
<dbReference type="HOGENOM" id="CLU_029848_0_0_11"/>
<dbReference type="UniPathway" id="UPA00075">
    <property type="reaction ID" value="UER00335"/>
</dbReference>
<dbReference type="Proteomes" id="UP000002419">
    <property type="component" value="Chromosome"/>
</dbReference>
<dbReference type="GO" id="GO:0005737">
    <property type="term" value="C:cytoplasm"/>
    <property type="evidence" value="ECO:0007669"/>
    <property type="project" value="UniProtKB-SubCell"/>
</dbReference>
<dbReference type="GO" id="GO:0004019">
    <property type="term" value="F:adenylosuccinate synthase activity"/>
    <property type="evidence" value="ECO:0007669"/>
    <property type="project" value="UniProtKB-UniRule"/>
</dbReference>
<dbReference type="GO" id="GO:0005525">
    <property type="term" value="F:GTP binding"/>
    <property type="evidence" value="ECO:0007669"/>
    <property type="project" value="UniProtKB-UniRule"/>
</dbReference>
<dbReference type="GO" id="GO:0000287">
    <property type="term" value="F:magnesium ion binding"/>
    <property type="evidence" value="ECO:0007669"/>
    <property type="project" value="UniProtKB-UniRule"/>
</dbReference>
<dbReference type="GO" id="GO:0044208">
    <property type="term" value="P:'de novo' AMP biosynthetic process"/>
    <property type="evidence" value="ECO:0007669"/>
    <property type="project" value="UniProtKB-UniRule"/>
</dbReference>
<dbReference type="GO" id="GO:0046040">
    <property type="term" value="P:IMP metabolic process"/>
    <property type="evidence" value="ECO:0007669"/>
    <property type="project" value="TreeGrafter"/>
</dbReference>
<dbReference type="CDD" id="cd03108">
    <property type="entry name" value="AdSS"/>
    <property type="match status" value="1"/>
</dbReference>
<dbReference type="FunFam" id="1.10.300.10:FF:000001">
    <property type="entry name" value="Adenylosuccinate synthetase"/>
    <property type="match status" value="1"/>
</dbReference>
<dbReference type="FunFam" id="3.90.170.10:FF:000001">
    <property type="entry name" value="Adenylosuccinate synthetase"/>
    <property type="match status" value="1"/>
</dbReference>
<dbReference type="Gene3D" id="3.40.440.10">
    <property type="entry name" value="Adenylosuccinate Synthetase, subunit A, domain 1"/>
    <property type="match status" value="1"/>
</dbReference>
<dbReference type="Gene3D" id="1.10.300.10">
    <property type="entry name" value="Adenylosuccinate Synthetase, subunit A, domain 2"/>
    <property type="match status" value="1"/>
</dbReference>
<dbReference type="Gene3D" id="3.90.170.10">
    <property type="entry name" value="Adenylosuccinate Synthetase, subunit A, domain 3"/>
    <property type="match status" value="1"/>
</dbReference>
<dbReference type="HAMAP" id="MF_00011">
    <property type="entry name" value="Adenylosucc_synth"/>
    <property type="match status" value="1"/>
</dbReference>
<dbReference type="InterPro" id="IPR018220">
    <property type="entry name" value="Adenylosuccin_syn_GTP-bd"/>
</dbReference>
<dbReference type="InterPro" id="IPR033128">
    <property type="entry name" value="Adenylosuccin_syn_Lys_AS"/>
</dbReference>
<dbReference type="InterPro" id="IPR042109">
    <property type="entry name" value="Adenylosuccinate_synth_dom1"/>
</dbReference>
<dbReference type="InterPro" id="IPR042110">
    <property type="entry name" value="Adenylosuccinate_synth_dom2"/>
</dbReference>
<dbReference type="InterPro" id="IPR042111">
    <property type="entry name" value="Adenylosuccinate_synth_dom3"/>
</dbReference>
<dbReference type="InterPro" id="IPR001114">
    <property type="entry name" value="Adenylosuccinate_synthetase"/>
</dbReference>
<dbReference type="InterPro" id="IPR027417">
    <property type="entry name" value="P-loop_NTPase"/>
</dbReference>
<dbReference type="NCBIfam" id="NF002223">
    <property type="entry name" value="PRK01117.1"/>
    <property type="match status" value="1"/>
</dbReference>
<dbReference type="NCBIfam" id="TIGR00184">
    <property type="entry name" value="purA"/>
    <property type="match status" value="1"/>
</dbReference>
<dbReference type="PANTHER" id="PTHR11846">
    <property type="entry name" value="ADENYLOSUCCINATE SYNTHETASE"/>
    <property type="match status" value="1"/>
</dbReference>
<dbReference type="PANTHER" id="PTHR11846:SF0">
    <property type="entry name" value="ADENYLOSUCCINATE SYNTHETASE"/>
    <property type="match status" value="1"/>
</dbReference>
<dbReference type="Pfam" id="PF00709">
    <property type="entry name" value="Adenylsucc_synt"/>
    <property type="match status" value="1"/>
</dbReference>
<dbReference type="SMART" id="SM00788">
    <property type="entry name" value="Adenylsucc_synt"/>
    <property type="match status" value="1"/>
</dbReference>
<dbReference type="SUPFAM" id="SSF52540">
    <property type="entry name" value="P-loop containing nucleoside triphosphate hydrolases"/>
    <property type="match status" value="1"/>
</dbReference>
<dbReference type="PROSITE" id="PS01266">
    <property type="entry name" value="ADENYLOSUCCIN_SYN_1"/>
    <property type="match status" value="1"/>
</dbReference>
<dbReference type="PROSITE" id="PS00513">
    <property type="entry name" value="ADENYLOSUCCIN_SYN_2"/>
    <property type="match status" value="1"/>
</dbReference>
<comment type="function">
    <text evidence="1">Plays an important role in the de novo pathway of purine nucleotide biosynthesis. Catalyzes the first committed step in the biosynthesis of AMP from IMP.</text>
</comment>
<comment type="catalytic activity">
    <reaction evidence="1">
        <text>IMP + L-aspartate + GTP = N(6)-(1,2-dicarboxyethyl)-AMP + GDP + phosphate + 2 H(+)</text>
        <dbReference type="Rhea" id="RHEA:15753"/>
        <dbReference type="ChEBI" id="CHEBI:15378"/>
        <dbReference type="ChEBI" id="CHEBI:29991"/>
        <dbReference type="ChEBI" id="CHEBI:37565"/>
        <dbReference type="ChEBI" id="CHEBI:43474"/>
        <dbReference type="ChEBI" id="CHEBI:57567"/>
        <dbReference type="ChEBI" id="CHEBI:58053"/>
        <dbReference type="ChEBI" id="CHEBI:58189"/>
        <dbReference type="EC" id="6.3.4.4"/>
    </reaction>
</comment>
<comment type="cofactor">
    <cofactor evidence="1">
        <name>Mg(2+)</name>
        <dbReference type="ChEBI" id="CHEBI:18420"/>
    </cofactor>
    <text evidence="1">Binds 1 Mg(2+) ion per subunit.</text>
</comment>
<comment type="pathway">
    <text evidence="1">Purine metabolism; AMP biosynthesis via de novo pathway; AMP from IMP: step 1/2.</text>
</comment>
<comment type="subunit">
    <text evidence="1">Homodimer.</text>
</comment>
<comment type="subcellular location">
    <subcellularLocation>
        <location evidence="1">Cytoplasm</location>
    </subcellularLocation>
</comment>
<comment type="similarity">
    <text evidence="1">Belongs to the adenylosuccinate synthetase family.</text>
</comment>
<evidence type="ECO:0000255" key="1">
    <source>
        <dbReference type="HAMAP-Rule" id="MF_00011"/>
    </source>
</evidence>
<proteinExistence type="inferred from homology"/>
<gene>
    <name evidence="1" type="primary">purA</name>
    <name type="ordered locus">BLD_1347</name>
</gene>
<protein>
    <recommendedName>
        <fullName evidence="1">Adenylosuccinate synthetase</fullName>
        <shortName evidence="1">AMPSase</shortName>
        <shortName evidence="1">AdSS</shortName>
        <ecNumber evidence="1">6.3.4.4</ecNumber>
    </recommendedName>
    <alternativeName>
        <fullName evidence="1">IMP--aspartate ligase</fullName>
    </alternativeName>
</protein>
<feature type="chain" id="PRO_1000089270" description="Adenylosuccinate synthetase">
    <location>
        <begin position="1"/>
        <end position="428"/>
    </location>
</feature>
<feature type="active site" description="Proton acceptor" evidence="1">
    <location>
        <position position="13"/>
    </location>
</feature>
<feature type="active site" description="Proton donor" evidence="1">
    <location>
        <position position="41"/>
    </location>
</feature>
<feature type="binding site" evidence="1">
    <location>
        <begin position="12"/>
        <end position="18"/>
    </location>
    <ligand>
        <name>GTP</name>
        <dbReference type="ChEBI" id="CHEBI:37565"/>
    </ligand>
</feature>
<feature type="binding site" description="in other chain" evidence="1">
    <location>
        <begin position="13"/>
        <end position="16"/>
    </location>
    <ligand>
        <name>IMP</name>
        <dbReference type="ChEBI" id="CHEBI:58053"/>
        <note>ligand shared between dimeric partners</note>
    </ligand>
</feature>
<feature type="binding site" evidence="1">
    <location>
        <position position="13"/>
    </location>
    <ligand>
        <name>Mg(2+)</name>
        <dbReference type="ChEBI" id="CHEBI:18420"/>
    </ligand>
</feature>
<feature type="binding site" description="in other chain" evidence="1">
    <location>
        <begin position="38"/>
        <end position="41"/>
    </location>
    <ligand>
        <name>IMP</name>
        <dbReference type="ChEBI" id="CHEBI:58053"/>
        <note>ligand shared between dimeric partners</note>
    </ligand>
</feature>
<feature type="binding site" evidence="1">
    <location>
        <begin position="40"/>
        <end position="42"/>
    </location>
    <ligand>
        <name>GTP</name>
        <dbReference type="ChEBI" id="CHEBI:37565"/>
    </ligand>
</feature>
<feature type="binding site" evidence="1">
    <location>
        <position position="40"/>
    </location>
    <ligand>
        <name>Mg(2+)</name>
        <dbReference type="ChEBI" id="CHEBI:18420"/>
    </ligand>
</feature>
<feature type="binding site" description="in other chain" evidence="1">
    <location>
        <position position="128"/>
    </location>
    <ligand>
        <name>IMP</name>
        <dbReference type="ChEBI" id="CHEBI:58053"/>
        <note>ligand shared between dimeric partners</note>
    </ligand>
</feature>
<feature type="binding site" evidence="1">
    <location>
        <position position="142"/>
    </location>
    <ligand>
        <name>IMP</name>
        <dbReference type="ChEBI" id="CHEBI:58053"/>
        <note>ligand shared between dimeric partners</note>
    </ligand>
</feature>
<feature type="binding site" description="in other chain" evidence="1">
    <location>
        <position position="223"/>
    </location>
    <ligand>
        <name>IMP</name>
        <dbReference type="ChEBI" id="CHEBI:58053"/>
        <note>ligand shared between dimeric partners</note>
    </ligand>
</feature>
<feature type="binding site" description="in other chain" evidence="1">
    <location>
        <position position="238"/>
    </location>
    <ligand>
        <name>IMP</name>
        <dbReference type="ChEBI" id="CHEBI:58053"/>
        <note>ligand shared between dimeric partners</note>
    </ligand>
</feature>
<feature type="binding site" evidence="1">
    <location>
        <begin position="298"/>
        <end position="304"/>
    </location>
    <ligand>
        <name>substrate</name>
    </ligand>
</feature>
<feature type="binding site" description="in other chain" evidence="1">
    <location>
        <position position="302"/>
    </location>
    <ligand>
        <name>IMP</name>
        <dbReference type="ChEBI" id="CHEBI:58053"/>
        <note>ligand shared between dimeric partners</note>
    </ligand>
</feature>
<feature type="binding site" evidence="1">
    <location>
        <position position="304"/>
    </location>
    <ligand>
        <name>GTP</name>
        <dbReference type="ChEBI" id="CHEBI:37565"/>
    </ligand>
</feature>
<feature type="binding site" evidence="1">
    <location>
        <begin position="330"/>
        <end position="332"/>
    </location>
    <ligand>
        <name>GTP</name>
        <dbReference type="ChEBI" id="CHEBI:37565"/>
    </ligand>
</feature>
<feature type="binding site" evidence="1">
    <location>
        <begin position="412"/>
        <end position="414"/>
    </location>
    <ligand>
        <name>GTP</name>
        <dbReference type="ChEBI" id="CHEBI:37565"/>
    </ligand>
</feature>
<organism>
    <name type="scientific">Bifidobacterium longum (strain DJO10A)</name>
    <dbReference type="NCBI Taxonomy" id="205913"/>
    <lineage>
        <taxon>Bacteria</taxon>
        <taxon>Bacillati</taxon>
        <taxon>Actinomycetota</taxon>
        <taxon>Actinomycetes</taxon>
        <taxon>Bifidobacteriales</taxon>
        <taxon>Bifidobacteriaceae</taxon>
        <taxon>Bifidobacterium</taxon>
    </lineage>
</organism>
<reference key="1">
    <citation type="journal article" date="2008" name="BMC Genomics">
        <title>Comparative genomic analysis of the gut bacterium Bifidobacterium longum reveals loci susceptible to deletion during pure culture growth.</title>
        <authorList>
            <person name="Lee J.H."/>
            <person name="Karamychev V.N."/>
            <person name="Kozyavkin S.A."/>
            <person name="Mills D."/>
            <person name="Pavlov A.R."/>
            <person name="Pavlova N.V."/>
            <person name="Polouchine N.N."/>
            <person name="Richardson P.M."/>
            <person name="Shakhova V.V."/>
            <person name="Slesarev A.I."/>
            <person name="Weimer B."/>
            <person name="O'Sullivan D.J."/>
        </authorList>
    </citation>
    <scope>NUCLEOTIDE SEQUENCE [LARGE SCALE GENOMIC DNA]</scope>
    <source>
        <strain>DJO10A</strain>
    </source>
</reference>
<keyword id="KW-0963">Cytoplasm</keyword>
<keyword id="KW-0342">GTP-binding</keyword>
<keyword id="KW-0436">Ligase</keyword>
<keyword id="KW-0460">Magnesium</keyword>
<keyword id="KW-0479">Metal-binding</keyword>
<keyword id="KW-0547">Nucleotide-binding</keyword>
<keyword id="KW-0658">Purine biosynthesis</keyword>
<name>PURA_BIFLD</name>